<reference key="1">
    <citation type="journal article" date="2008" name="J. Bacteriol.">
        <title>The pangenome structure of Escherichia coli: comparative genomic analysis of E. coli commensal and pathogenic isolates.</title>
        <authorList>
            <person name="Rasko D.A."/>
            <person name="Rosovitz M.J."/>
            <person name="Myers G.S.A."/>
            <person name="Mongodin E.F."/>
            <person name="Fricke W.F."/>
            <person name="Gajer P."/>
            <person name="Crabtree J."/>
            <person name="Sebaihia M."/>
            <person name="Thomson N.R."/>
            <person name="Chaudhuri R."/>
            <person name="Henderson I.R."/>
            <person name="Sperandio V."/>
            <person name="Ravel J."/>
        </authorList>
    </citation>
    <scope>NUCLEOTIDE SEQUENCE [LARGE SCALE GENOMIC DNA]</scope>
    <source>
        <strain>HS</strain>
    </source>
</reference>
<comment type="function">
    <text evidence="1">DNA-dependent RNA polymerase catalyzes the transcription of DNA into RNA using the four ribonucleoside triphosphates as substrates.</text>
</comment>
<comment type="catalytic activity">
    <reaction evidence="1">
        <text>RNA(n) + a ribonucleoside 5'-triphosphate = RNA(n+1) + diphosphate</text>
        <dbReference type="Rhea" id="RHEA:21248"/>
        <dbReference type="Rhea" id="RHEA-COMP:14527"/>
        <dbReference type="Rhea" id="RHEA-COMP:17342"/>
        <dbReference type="ChEBI" id="CHEBI:33019"/>
        <dbReference type="ChEBI" id="CHEBI:61557"/>
        <dbReference type="ChEBI" id="CHEBI:140395"/>
        <dbReference type="EC" id="2.7.7.6"/>
    </reaction>
</comment>
<comment type="cofactor">
    <cofactor evidence="1">
        <name>Mg(2+)</name>
        <dbReference type="ChEBI" id="CHEBI:18420"/>
    </cofactor>
    <text evidence="1">Binds 1 Mg(2+) ion per subunit.</text>
</comment>
<comment type="cofactor">
    <cofactor evidence="1">
        <name>Zn(2+)</name>
        <dbReference type="ChEBI" id="CHEBI:29105"/>
    </cofactor>
    <text evidence="1">Binds 2 Zn(2+) ions per subunit.</text>
</comment>
<comment type="subunit">
    <text evidence="1">The RNAP catalytic core consists of 2 alpha, 1 beta, 1 beta' and 1 omega subunit. When a sigma factor is associated with the core the holoenzyme is formed, which can initiate transcription.</text>
</comment>
<comment type="similarity">
    <text evidence="1">Belongs to the RNA polymerase beta' chain family.</text>
</comment>
<organism>
    <name type="scientific">Escherichia coli O9:H4 (strain HS)</name>
    <dbReference type="NCBI Taxonomy" id="331112"/>
    <lineage>
        <taxon>Bacteria</taxon>
        <taxon>Pseudomonadati</taxon>
        <taxon>Pseudomonadota</taxon>
        <taxon>Gammaproteobacteria</taxon>
        <taxon>Enterobacterales</taxon>
        <taxon>Enterobacteriaceae</taxon>
        <taxon>Escherichia</taxon>
    </lineage>
</organism>
<sequence length="1407" mass="155160">MKDLLKFLKAQTKTEEFDAIKIALASPDMIRSWSFGEVKKPETINYRTFKPERDGLFCARIFGPVKDYECLCGKYKRLKHRGVICEKCGVEVTQTKVRRERMGHIELASPTAHIWFLKSLPSRIGLLLDMPLRDIERVLYFESYVVIEGGMTNLERQQILTEEQYLDALEEFGDEFDAKMGAEAIQALLKSMDLEQECEQLREELNETNSETKRKKLTKRIKLLEAFVQSGNKPEWMILTVLPVLPPDLRPLVPLDGGRFATSDLNDLYRRVINRNNRLKRLLDLAAPDIIVRNEKRMLQEAVDALLDNGRRGRAITGSNKRPLKSLADMIKGKQGRFRQNLLGKRVDYSGRSVITVGPYLRLHQCGLPKKMALELFKPFIYGKLELRGLATTIKAAKKMVEREEAVVWDILDEVIREHPVLLNRAPTLHRLGIQAFEPVLIEGKAIQLHPLVCAAYNADFDGDQMAVHVPLTLEAQLEARALMMSTNNILSPANGEPIIVPSQDVVLGLYYMTRDCVNAKGEGMVLTGPKEAERLYRSGLASLHARVKVRITEYEKDANGELVAKTSLKDTTVGRAILWMIVPKGLPYSIVNQALGKKAISKMLNTCYRILGLKPTVIFADQIMYTGFAYAARSGASVGIDDMVIPEKKHEIISEAEAEVAEIQEQFQSGLVTAGERYNKVIDIWAAANDRVSKAMMDNLQTETVINRDGQEEKQVSFNSIYMMADSGARGSAAQIRQLAGMRGLMAKPDGSIIETPITANFREGLNVLQYFISTHGARKGLADTALKTANSGYLTRRLVDVAQDLVVTEDDCGTHEGIMMTPVIEGGDVKEPLRDRVLGRVTAEDVLKPGTADILVPRNTLLHEQWCDLLEENSVDAVKVRSVVSCDTDFGVCAHCYGRDLARGHIINKGEAIGVIAAQSIGEPGTQLTMRTFHIGGAASRAAAESSIQVKNKGSIKLSNVKSVVNSSGKLVITSRNTELKLIDEFGRTKESYKVPYGAVLAKGDGEQVAGGETVANWDPHTMPVITEVSGFVRFTDMIDGQTITRQTDELTGLSSLVVLDSAERTAGGKDLRPALKIVDAQGNDVLIPGTDMPAQYFLPGKAIVQLEDGVQISSGDTLARIPQESGGTKDITGGLPRVADLFEARRPKEPAILAEISGIVSFGKETKGKRRLVITPVDGSDPYEEMIPKWRQLNVFEGERVERGDVISDGPEAPHDILRLRGVHAVTRYIVNEVQDVYRLQGVKINDKHIEVIVRQMLRKATIVNAGSSDFLEGEQVEYSRVKIANRELEANGKVGATYSRDLLGITKASLATESFISAASFQETTRVLTEAAVAGKRDELRGLKENVIVGRLIPAGTGYAYHQDRMRRRAAGEAPAAPQVTAEDASASLAELLNAGLGGSDNE</sequence>
<evidence type="ECO:0000255" key="1">
    <source>
        <dbReference type="HAMAP-Rule" id="MF_01322"/>
    </source>
</evidence>
<dbReference type="EC" id="2.7.7.6" evidence="1"/>
<dbReference type="EMBL" id="CP000802">
    <property type="protein sequence ID" value="ABV08391.1"/>
    <property type="molecule type" value="Genomic_DNA"/>
</dbReference>
<dbReference type="RefSeq" id="WP_000653944.1">
    <property type="nucleotide sequence ID" value="NC_009800.1"/>
</dbReference>
<dbReference type="SMR" id="A8A787"/>
<dbReference type="GeneID" id="93777906"/>
<dbReference type="KEGG" id="ecx:EcHS_A4221"/>
<dbReference type="HOGENOM" id="CLU_000524_3_1_6"/>
<dbReference type="GO" id="GO:0000428">
    <property type="term" value="C:DNA-directed RNA polymerase complex"/>
    <property type="evidence" value="ECO:0007669"/>
    <property type="project" value="UniProtKB-KW"/>
</dbReference>
<dbReference type="GO" id="GO:0003677">
    <property type="term" value="F:DNA binding"/>
    <property type="evidence" value="ECO:0007669"/>
    <property type="project" value="UniProtKB-UniRule"/>
</dbReference>
<dbReference type="GO" id="GO:0003899">
    <property type="term" value="F:DNA-directed RNA polymerase activity"/>
    <property type="evidence" value="ECO:0007669"/>
    <property type="project" value="UniProtKB-UniRule"/>
</dbReference>
<dbReference type="GO" id="GO:0000287">
    <property type="term" value="F:magnesium ion binding"/>
    <property type="evidence" value="ECO:0007669"/>
    <property type="project" value="UniProtKB-UniRule"/>
</dbReference>
<dbReference type="GO" id="GO:0008270">
    <property type="term" value="F:zinc ion binding"/>
    <property type="evidence" value="ECO:0007669"/>
    <property type="project" value="UniProtKB-UniRule"/>
</dbReference>
<dbReference type="GO" id="GO:0006351">
    <property type="term" value="P:DNA-templated transcription"/>
    <property type="evidence" value="ECO:0007669"/>
    <property type="project" value="UniProtKB-UniRule"/>
</dbReference>
<dbReference type="CDD" id="cd02655">
    <property type="entry name" value="RNAP_beta'_C"/>
    <property type="match status" value="1"/>
</dbReference>
<dbReference type="CDD" id="cd01609">
    <property type="entry name" value="RNAP_beta'_N"/>
    <property type="match status" value="1"/>
</dbReference>
<dbReference type="FunFam" id="1.10.132.30:FF:000003">
    <property type="entry name" value="DNA-directed RNA polymerase subunit beta"/>
    <property type="match status" value="1"/>
</dbReference>
<dbReference type="FunFam" id="1.10.150.390:FF:000002">
    <property type="entry name" value="DNA-directed RNA polymerase subunit beta"/>
    <property type="match status" value="1"/>
</dbReference>
<dbReference type="FunFam" id="1.10.274.100:FF:000002">
    <property type="entry name" value="DNA-directed RNA polymerase subunit beta"/>
    <property type="match status" value="1"/>
</dbReference>
<dbReference type="FunFam" id="1.10.40.90:FF:000001">
    <property type="entry name" value="DNA-directed RNA polymerase subunit beta"/>
    <property type="match status" value="1"/>
</dbReference>
<dbReference type="FunFam" id="2.40.50.100:FF:000012">
    <property type="entry name" value="DNA-directed RNA polymerase subunit beta"/>
    <property type="match status" value="1"/>
</dbReference>
<dbReference type="FunFam" id="2.40.50.100:FF:000016">
    <property type="entry name" value="DNA-directed RNA polymerase subunit beta"/>
    <property type="match status" value="1"/>
</dbReference>
<dbReference type="FunFam" id="2.40.50.100:FF:000019">
    <property type="entry name" value="DNA-directed RNA polymerase subunit beta"/>
    <property type="match status" value="1"/>
</dbReference>
<dbReference type="FunFam" id="4.10.860.120:FF:000001">
    <property type="entry name" value="DNA-directed RNA polymerase subunit beta"/>
    <property type="match status" value="1"/>
</dbReference>
<dbReference type="Gene3D" id="1.10.132.30">
    <property type="match status" value="1"/>
</dbReference>
<dbReference type="Gene3D" id="1.10.150.390">
    <property type="match status" value="1"/>
</dbReference>
<dbReference type="Gene3D" id="1.10.1790.20">
    <property type="match status" value="1"/>
</dbReference>
<dbReference type="Gene3D" id="1.10.40.90">
    <property type="match status" value="1"/>
</dbReference>
<dbReference type="Gene3D" id="2.40.40.20">
    <property type="match status" value="1"/>
</dbReference>
<dbReference type="Gene3D" id="2.40.50.100">
    <property type="match status" value="3"/>
</dbReference>
<dbReference type="Gene3D" id="4.10.860.120">
    <property type="entry name" value="RNA polymerase II, clamp domain"/>
    <property type="match status" value="1"/>
</dbReference>
<dbReference type="Gene3D" id="1.10.274.100">
    <property type="entry name" value="RNA polymerase Rpb1, domain 3"/>
    <property type="match status" value="1"/>
</dbReference>
<dbReference type="HAMAP" id="MF_01322">
    <property type="entry name" value="RNApol_bact_RpoC"/>
    <property type="match status" value="1"/>
</dbReference>
<dbReference type="InterPro" id="IPR045867">
    <property type="entry name" value="DNA-dir_RpoC_beta_prime"/>
</dbReference>
<dbReference type="InterPro" id="IPR012754">
    <property type="entry name" value="DNA-dir_RpoC_beta_prime_bact"/>
</dbReference>
<dbReference type="InterPro" id="IPR000722">
    <property type="entry name" value="RNA_pol_asu"/>
</dbReference>
<dbReference type="InterPro" id="IPR006592">
    <property type="entry name" value="RNA_pol_N"/>
</dbReference>
<dbReference type="InterPro" id="IPR007080">
    <property type="entry name" value="RNA_pol_Rpb1_1"/>
</dbReference>
<dbReference type="InterPro" id="IPR007066">
    <property type="entry name" value="RNA_pol_Rpb1_3"/>
</dbReference>
<dbReference type="InterPro" id="IPR042102">
    <property type="entry name" value="RNA_pol_Rpb1_3_sf"/>
</dbReference>
<dbReference type="InterPro" id="IPR007083">
    <property type="entry name" value="RNA_pol_Rpb1_4"/>
</dbReference>
<dbReference type="InterPro" id="IPR007081">
    <property type="entry name" value="RNA_pol_Rpb1_5"/>
</dbReference>
<dbReference type="InterPro" id="IPR044893">
    <property type="entry name" value="RNA_pol_Rpb1_clamp_domain"/>
</dbReference>
<dbReference type="InterPro" id="IPR038120">
    <property type="entry name" value="Rpb1_funnel_sf"/>
</dbReference>
<dbReference type="NCBIfam" id="TIGR02386">
    <property type="entry name" value="rpoC_TIGR"/>
    <property type="match status" value="1"/>
</dbReference>
<dbReference type="PANTHER" id="PTHR19376">
    <property type="entry name" value="DNA-DIRECTED RNA POLYMERASE"/>
    <property type="match status" value="1"/>
</dbReference>
<dbReference type="PANTHER" id="PTHR19376:SF54">
    <property type="entry name" value="DNA-DIRECTED RNA POLYMERASE SUBUNIT BETA"/>
    <property type="match status" value="1"/>
</dbReference>
<dbReference type="Pfam" id="PF04997">
    <property type="entry name" value="RNA_pol_Rpb1_1"/>
    <property type="match status" value="1"/>
</dbReference>
<dbReference type="Pfam" id="PF00623">
    <property type="entry name" value="RNA_pol_Rpb1_2"/>
    <property type="match status" value="2"/>
</dbReference>
<dbReference type="Pfam" id="PF04983">
    <property type="entry name" value="RNA_pol_Rpb1_3"/>
    <property type="match status" value="1"/>
</dbReference>
<dbReference type="Pfam" id="PF05000">
    <property type="entry name" value="RNA_pol_Rpb1_4"/>
    <property type="match status" value="1"/>
</dbReference>
<dbReference type="Pfam" id="PF04998">
    <property type="entry name" value="RNA_pol_Rpb1_5"/>
    <property type="match status" value="1"/>
</dbReference>
<dbReference type="SMART" id="SM00663">
    <property type="entry name" value="RPOLA_N"/>
    <property type="match status" value="1"/>
</dbReference>
<dbReference type="SUPFAM" id="SSF64484">
    <property type="entry name" value="beta and beta-prime subunits of DNA dependent RNA-polymerase"/>
    <property type="match status" value="1"/>
</dbReference>
<keyword id="KW-0007">Acetylation</keyword>
<keyword id="KW-0240">DNA-directed RNA polymerase</keyword>
<keyword id="KW-0460">Magnesium</keyword>
<keyword id="KW-0479">Metal-binding</keyword>
<keyword id="KW-0548">Nucleotidyltransferase</keyword>
<keyword id="KW-0804">Transcription</keyword>
<keyword id="KW-0808">Transferase</keyword>
<keyword id="KW-0862">Zinc</keyword>
<proteinExistence type="inferred from homology"/>
<gene>
    <name evidence="1" type="primary">rpoC</name>
    <name type="ordered locus">EcHS_A4221</name>
</gene>
<protein>
    <recommendedName>
        <fullName evidence="1">DNA-directed RNA polymerase subunit beta'</fullName>
        <shortName evidence="1">RNAP subunit beta'</shortName>
        <ecNumber evidence="1">2.7.7.6</ecNumber>
    </recommendedName>
    <alternativeName>
        <fullName evidence="1">RNA polymerase subunit beta'</fullName>
    </alternativeName>
    <alternativeName>
        <fullName evidence="1">Transcriptase subunit beta'</fullName>
    </alternativeName>
</protein>
<accession>A8A787</accession>
<name>RPOC_ECOHS</name>
<feature type="chain" id="PRO_0000353362" description="DNA-directed RNA polymerase subunit beta'">
    <location>
        <begin position="1"/>
        <end position="1407"/>
    </location>
</feature>
<feature type="binding site" evidence="1">
    <location>
        <position position="70"/>
    </location>
    <ligand>
        <name>Zn(2+)</name>
        <dbReference type="ChEBI" id="CHEBI:29105"/>
        <label>1</label>
    </ligand>
</feature>
<feature type="binding site" evidence="1">
    <location>
        <position position="72"/>
    </location>
    <ligand>
        <name>Zn(2+)</name>
        <dbReference type="ChEBI" id="CHEBI:29105"/>
        <label>1</label>
    </ligand>
</feature>
<feature type="binding site" evidence="1">
    <location>
        <position position="85"/>
    </location>
    <ligand>
        <name>Zn(2+)</name>
        <dbReference type="ChEBI" id="CHEBI:29105"/>
        <label>1</label>
    </ligand>
</feature>
<feature type="binding site" evidence="1">
    <location>
        <position position="88"/>
    </location>
    <ligand>
        <name>Zn(2+)</name>
        <dbReference type="ChEBI" id="CHEBI:29105"/>
        <label>1</label>
    </ligand>
</feature>
<feature type="binding site" evidence="1">
    <location>
        <position position="460"/>
    </location>
    <ligand>
        <name>Mg(2+)</name>
        <dbReference type="ChEBI" id="CHEBI:18420"/>
    </ligand>
</feature>
<feature type="binding site" evidence="1">
    <location>
        <position position="462"/>
    </location>
    <ligand>
        <name>Mg(2+)</name>
        <dbReference type="ChEBI" id="CHEBI:18420"/>
    </ligand>
</feature>
<feature type="binding site" evidence="1">
    <location>
        <position position="464"/>
    </location>
    <ligand>
        <name>Mg(2+)</name>
        <dbReference type="ChEBI" id="CHEBI:18420"/>
    </ligand>
</feature>
<feature type="binding site" evidence="1">
    <location>
        <position position="814"/>
    </location>
    <ligand>
        <name>Zn(2+)</name>
        <dbReference type="ChEBI" id="CHEBI:29105"/>
        <label>2</label>
    </ligand>
</feature>
<feature type="binding site" evidence="1">
    <location>
        <position position="888"/>
    </location>
    <ligand>
        <name>Zn(2+)</name>
        <dbReference type="ChEBI" id="CHEBI:29105"/>
        <label>2</label>
    </ligand>
</feature>
<feature type="binding site" evidence="1">
    <location>
        <position position="895"/>
    </location>
    <ligand>
        <name>Zn(2+)</name>
        <dbReference type="ChEBI" id="CHEBI:29105"/>
        <label>2</label>
    </ligand>
</feature>
<feature type="binding site" evidence="1">
    <location>
        <position position="898"/>
    </location>
    <ligand>
        <name>Zn(2+)</name>
        <dbReference type="ChEBI" id="CHEBI:29105"/>
        <label>2</label>
    </ligand>
</feature>
<feature type="modified residue" description="N6-acetyllysine" evidence="1">
    <location>
        <position position="972"/>
    </location>
</feature>